<organism>
    <name type="scientific">Jannaschia sp. (strain CCS1)</name>
    <dbReference type="NCBI Taxonomy" id="290400"/>
    <lineage>
        <taxon>Bacteria</taxon>
        <taxon>Pseudomonadati</taxon>
        <taxon>Pseudomonadota</taxon>
        <taxon>Alphaproteobacteria</taxon>
        <taxon>Rhodobacterales</taxon>
        <taxon>Roseobacteraceae</taxon>
        <taxon>Jannaschia</taxon>
    </lineage>
</organism>
<gene>
    <name evidence="1" type="primary">pyrB</name>
    <name type="ordered locus">Jann_3902</name>
</gene>
<feature type="chain" id="PRO_0000301581" description="Aspartate carbamoyltransferase catalytic subunit">
    <location>
        <begin position="1"/>
        <end position="314"/>
    </location>
</feature>
<feature type="binding site" evidence="1">
    <location>
        <position position="58"/>
    </location>
    <ligand>
        <name>carbamoyl phosphate</name>
        <dbReference type="ChEBI" id="CHEBI:58228"/>
    </ligand>
</feature>
<feature type="binding site" evidence="1">
    <location>
        <position position="59"/>
    </location>
    <ligand>
        <name>carbamoyl phosphate</name>
        <dbReference type="ChEBI" id="CHEBI:58228"/>
    </ligand>
</feature>
<feature type="binding site" evidence="1">
    <location>
        <position position="86"/>
    </location>
    <ligand>
        <name>L-aspartate</name>
        <dbReference type="ChEBI" id="CHEBI:29991"/>
    </ligand>
</feature>
<feature type="binding site" evidence="1">
    <location>
        <position position="108"/>
    </location>
    <ligand>
        <name>carbamoyl phosphate</name>
        <dbReference type="ChEBI" id="CHEBI:58228"/>
    </ligand>
</feature>
<feature type="binding site" evidence="1">
    <location>
        <position position="136"/>
    </location>
    <ligand>
        <name>carbamoyl phosphate</name>
        <dbReference type="ChEBI" id="CHEBI:58228"/>
    </ligand>
</feature>
<feature type="binding site" evidence="1">
    <location>
        <position position="139"/>
    </location>
    <ligand>
        <name>carbamoyl phosphate</name>
        <dbReference type="ChEBI" id="CHEBI:58228"/>
    </ligand>
</feature>
<feature type="binding site" evidence="1">
    <location>
        <position position="169"/>
    </location>
    <ligand>
        <name>L-aspartate</name>
        <dbReference type="ChEBI" id="CHEBI:29991"/>
    </ligand>
</feature>
<feature type="binding site" evidence="1">
    <location>
        <position position="223"/>
    </location>
    <ligand>
        <name>L-aspartate</name>
        <dbReference type="ChEBI" id="CHEBI:29991"/>
    </ligand>
</feature>
<feature type="binding site" evidence="1">
    <location>
        <position position="264"/>
    </location>
    <ligand>
        <name>carbamoyl phosphate</name>
        <dbReference type="ChEBI" id="CHEBI:58228"/>
    </ligand>
</feature>
<feature type="binding site" evidence="1">
    <location>
        <position position="265"/>
    </location>
    <ligand>
        <name>carbamoyl phosphate</name>
        <dbReference type="ChEBI" id="CHEBI:58228"/>
    </ligand>
</feature>
<keyword id="KW-0665">Pyrimidine biosynthesis</keyword>
<keyword id="KW-1185">Reference proteome</keyword>
<keyword id="KW-0808">Transferase</keyword>
<protein>
    <recommendedName>
        <fullName evidence="1">Aspartate carbamoyltransferase catalytic subunit</fullName>
        <ecNumber evidence="1">2.1.3.2</ecNumber>
    </recommendedName>
    <alternativeName>
        <fullName evidence="1">Aspartate transcarbamylase</fullName>
        <shortName evidence="1">ATCase</shortName>
    </alternativeName>
</protein>
<reference key="1">
    <citation type="submission" date="2006-02" db="EMBL/GenBank/DDBJ databases">
        <title>Complete sequence of chromosome of Jannaschia sp. CCS1.</title>
        <authorList>
            <consortium name="US DOE Joint Genome Institute"/>
            <person name="Copeland A."/>
            <person name="Lucas S."/>
            <person name="Lapidus A."/>
            <person name="Barry K."/>
            <person name="Detter J.C."/>
            <person name="Glavina del Rio T."/>
            <person name="Hammon N."/>
            <person name="Israni S."/>
            <person name="Pitluck S."/>
            <person name="Brettin T."/>
            <person name="Bruce D."/>
            <person name="Han C."/>
            <person name="Tapia R."/>
            <person name="Gilna P."/>
            <person name="Chertkov O."/>
            <person name="Saunders E."/>
            <person name="Schmutz J."/>
            <person name="Larimer F."/>
            <person name="Land M."/>
            <person name="Kyrpides N."/>
            <person name="Lykidis A."/>
            <person name="Moran M.A."/>
            <person name="Belas R."/>
            <person name="Ye W."/>
            <person name="Buchan A."/>
            <person name="Gonzalez J.M."/>
            <person name="Schell M.A."/>
            <person name="Richardson P."/>
        </authorList>
    </citation>
    <scope>NUCLEOTIDE SEQUENCE [LARGE SCALE GENOMIC DNA]</scope>
    <source>
        <strain>CCS1</strain>
    </source>
</reference>
<proteinExistence type="inferred from homology"/>
<sequence length="314" mass="34673">MTFNQHHLLGIEELSQTEITTLLDRANVHAEAERGSRDHGHPLRGLTQINMFFENSTRTQASFEIAGKRLGADVMNMAMQTSSVKKGETLIDTALTLNAMHPDLLVVRHPHSGAVKLLADKVNCAVLNAGDGRHEHPTQALLDALTIRRAKGRLHRLNVAICGDIAHSRVARSNILLLGKMENRIRLIGTPTLMPSGVADWGVEVYDNMAEGLADCDVVMMLRLQKERMDGAFIPSEREYYHRFGLDAAKLSVAKDDAIIMHPGPMNRGVEIDGLLADDINRSVIQEQVEMGVAVRMAVMELLAENLRDRRAAA</sequence>
<dbReference type="EC" id="2.1.3.2" evidence="1"/>
<dbReference type="EMBL" id="CP000264">
    <property type="protein sequence ID" value="ABD56819.1"/>
    <property type="molecule type" value="Genomic_DNA"/>
</dbReference>
<dbReference type="RefSeq" id="WP_011457016.1">
    <property type="nucleotide sequence ID" value="NC_007802.1"/>
</dbReference>
<dbReference type="SMR" id="Q28KE3"/>
<dbReference type="STRING" id="290400.Jann_3902"/>
<dbReference type="KEGG" id="jan:Jann_3902"/>
<dbReference type="eggNOG" id="COG0540">
    <property type="taxonomic scope" value="Bacteria"/>
</dbReference>
<dbReference type="HOGENOM" id="CLU_043846_2_0_5"/>
<dbReference type="OrthoDB" id="9774690at2"/>
<dbReference type="UniPathway" id="UPA00070">
    <property type="reaction ID" value="UER00116"/>
</dbReference>
<dbReference type="Proteomes" id="UP000008326">
    <property type="component" value="Chromosome"/>
</dbReference>
<dbReference type="GO" id="GO:0005829">
    <property type="term" value="C:cytosol"/>
    <property type="evidence" value="ECO:0007669"/>
    <property type="project" value="TreeGrafter"/>
</dbReference>
<dbReference type="GO" id="GO:0016597">
    <property type="term" value="F:amino acid binding"/>
    <property type="evidence" value="ECO:0007669"/>
    <property type="project" value="InterPro"/>
</dbReference>
<dbReference type="GO" id="GO:0004070">
    <property type="term" value="F:aspartate carbamoyltransferase activity"/>
    <property type="evidence" value="ECO:0007669"/>
    <property type="project" value="UniProtKB-UniRule"/>
</dbReference>
<dbReference type="GO" id="GO:0006207">
    <property type="term" value="P:'de novo' pyrimidine nucleobase biosynthetic process"/>
    <property type="evidence" value="ECO:0007669"/>
    <property type="project" value="InterPro"/>
</dbReference>
<dbReference type="GO" id="GO:0044205">
    <property type="term" value="P:'de novo' UMP biosynthetic process"/>
    <property type="evidence" value="ECO:0007669"/>
    <property type="project" value="UniProtKB-UniRule"/>
</dbReference>
<dbReference type="GO" id="GO:0006520">
    <property type="term" value="P:amino acid metabolic process"/>
    <property type="evidence" value="ECO:0007669"/>
    <property type="project" value="InterPro"/>
</dbReference>
<dbReference type="FunFam" id="3.40.50.1370:FF:000007">
    <property type="entry name" value="Aspartate carbamoyltransferase"/>
    <property type="match status" value="1"/>
</dbReference>
<dbReference type="Gene3D" id="3.40.50.1370">
    <property type="entry name" value="Aspartate/ornithine carbamoyltransferase"/>
    <property type="match status" value="2"/>
</dbReference>
<dbReference type="HAMAP" id="MF_00001">
    <property type="entry name" value="Asp_carb_tr"/>
    <property type="match status" value="1"/>
</dbReference>
<dbReference type="InterPro" id="IPR006132">
    <property type="entry name" value="Asp/Orn_carbamoyltranf_P-bd"/>
</dbReference>
<dbReference type="InterPro" id="IPR006130">
    <property type="entry name" value="Asp/Orn_carbamoylTrfase"/>
</dbReference>
<dbReference type="InterPro" id="IPR036901">
    <property type="entry name" value="Asp/Orn_carbamoylTrfase_sf"/>
</dbReference>
<dbReference type="InterPro" id="IPR002082">
    <property type="entry name" value="Asp_carbamoyltransf"/>
</dbReference>
<dbReference type="InterPro" id="IPR006131">
    <property type="entry name" value="Asp_carbamoyltransf_Asp/Orn-bd"/>
</dbReference>
<dbReference type="NCBIfam" id="TIGR00670">
    <property type="entry name" value="asp_carb_tr"/>
    <property type="match status" value="1"/>
</dbReference>
<dbReference type="NCBIfam" id="NF002032">
    <property type="entry name" value="PRK00856.1"/>
    <property type="match status" value="1"/>
</dbReference>
<dbReference type="PANTHER" id="PTHR45753:SF6">
    <property type="entry name" value="ASPARTATE CARBAMOYLTRANSFERASE"/>
    <property type="match status" value="1"/>
</dbReference>
<dbReference type="PANTHER" id="PTHR45753">
    <property type="entry name" value="ORNITHINE CARBAMOYLTRANSFERASE, MITOCHONDRIAL"/>
    <property type="match status" value="1"/>
</dbReference>
<dbReference type="Pfam" id="PF00185">
    <property type="entry name" value="OTCace"/>
    <property type="match status" value="1"/>
</dbReference>
<dbReference type="Pfam" id="PF02729">
    <property type="entry name" value="OTCace_N"/>
    <property type="match status" value="1"/>
</dbReference>
<dbReference type="PRINTS" id="PR00100">
    <property type="entry name" value="AOTCASE"/>
</dbReference>
<dbReference type="PRINTS" id="PR00101">
    <property type="entry name" value="ATCASE"/>
</dbReference>
<dbReference type="SUPFAM" id="SSF53671">
    <property type="entry name" value="Aspartate/ornithine carbamoyltransferase"/>
    <property type="match status" value="1"/>
</dbReference>
<dbReference type="PROSITE" id="PS00097">
    <property type="entry name" value="CARBAMOYLTRANSFERASE"/>
    <property type="match status" value="1"/>
</dbReference>
<comment type="function">
    <text evidence="1">Catalyzes the condensation of carbamoyl phosphate and aspartate to form carbamoyl aspartate and inorganic phosphate, the committed step in the de novo pyrimidine nucleotide biosynthesis pathway.</text>
</comment>
<comment type="catalytic activity">
    <reaction evidence="1">
        <text>carbamoyl phosphate + L-aspartate = N-carbamoyl-L-aspartate + phosphate + H(+)</text>
        <dbReference type="Rhea" id="RHEA:20013"/>
        <dbReference type="ChEBI" id="CHEBI:15378"/>
        <dbReference type="ChEBI" id="CHEBI:29991"/>
        <dbReference type="ChEBI" id="CHEBI:32814"/>
        <dbReference type="ChEBI" id="CHEBI:43474"/>
        <dbReference type="ChEBI" id="CHEBI:58228"/>
        <dbReference type="EC" id="2.1.3.2"/>
    </reaction>
</comment>
<comment type="pathway">
    <text evidence="1">Pyrimidine metabolism; UMP biosynthesis via de novo pathway; (S)-dihydroorotate from bicarbonate: step 2/3.</text>
</comment>
<comment type="subunit">
    <text evidence="1">Heterododecamer (2C3:3R2) of six catalytic PyrB chains organized as two trimers (C3), and six regulatory PyrI chains organized as three dimers (R2).</text>
</comment>
<comment type="similarity">
    <text evidence="1">Belongs to the aspartate/ornithine carbamoyltransferase superfamily. ATCase family.</text>
</comment>
<accession>Q28KE3</accession>
<name>PYRB_JANSC</name>
<evidence type="ECO:0000255" key="1">
    <source>
        <dbReference type="HAMAP-Rule" id="MF_00001"/>
    </source>
</evidence>